<dbReference type="EC" id="3.5.1.5" evidence="1"/>
<dbReference type="EMBL" id="BA000043">
    <property type="protein sequence ID" value="BAD76215.1"/>
    <property type="molecule type" value="Genomic_DNA"/>
</dbReference>
<dbReference type="RefSeq" id="WP_011231416.1">
    <property type="nucleotide sequence ID" value="NC_006510.1"/>
</dbReference>
<dbReference type="SMR" id="Q5KYM1"/>
<dbReference type="STRING" id="235909.GK1930"/>
<dbReference type="MEROPS" id="M38.982"/>
<dbReference type="KEGG" id="gka:GK1930"/>
<dbReference type="PATRIC" id="fig|235909.7.peg.2071"/>
<dbReference type="eggNOG" id="COG0804">
    <property type="taxonomic scope" value="Bacteria"/>
</dbReference>
<dbReference type="HOGENOM" id="CLU_000980_0_0_9"/>
<dbReference type="UniPathway" id="UPA00258">
    <property type="reaction ID" value="UER00370"/>
</dbReference>
<dbReference type="Proteomes" id="UP000001172">
    <property type="component" value="Chromosome"/>
</dbReference>
<dbReference type="GO" id="GO:0005737">
    <property type="term" value="C:cytoplasm"/>
    <property type="evidence" value="ECO:0007669"/>
    <property type="project" value="UniProtKB-SubCell"/>
</dbReference>
<dbReference type="GO" id="GO:0016151">
    <property type="term" value="F:nickel cation binding"/>
    <property type="evidence" value="ECO:0007669"/>
    <property type="project" value="UniProtKB-UniRule"/>
</dbReference>
<dbReference type="GO" id="GO:0009039">
    <property type="term" value="F:urease activity"/>
    <property type="evidence" value="ECO:0007669"/>
    <property type="project" value="UniProtKB-UniRule"/>
</dbReference>
<dbReference type="GO" id="GO:0043419">
    <property type="term" value="P:urea catabolic process"/>
    <property type="evidence" value="ECO:0007669"/>
    <property type="project" value="UniProtKB-UniRule"/>
</dbReference>
<dbReference type="CDD" id="cd00375">
    <property type="entry name" value="Urease_alpha"/>
    <property type="match status" value="1"/>
</dbReference>
<dbReference type="Gene3D" id="3.20.20.140">
    <property type="entry name" value="Metal-dependent hydrolases"/>
    <property type="match status" value="1"/>
</dbReference>
<dbReference type="Gene3D" id="2.30.40.10">
    <property type="entry name" value="Urease, subunit C, domain 1"/>
    <property type="match status" value="1"/>
</dbReference>
<dbReference type="HAMAP" id="MF_01953">
    <property type="entry name" value="Urease_alpha"/>
    <property type="match status" value="1"/>
</dbReference>
<dbReference type="InterPro" id="IPR006680">
    <property type="entry name" value="Amidohydro-rel"/>
</dbReference>
<dbReference type="InterPro" id="IPR011059">
    <property type="entry name" value="Metal-dep_hydrolase_composite"/>
</dbReference>
<dbReference type="InterPro" id="IPR032466">
    <property type="entry name" value="Metal_Hydrolase"/>
</dbReference>
<dbReference type="InterPro" id="IPR011612">
    <property type="entry name" value="Urease_alpha_N_dom"/>
</dbReference>
<dbReference type="InterPro" id="IPR050112">
    <property type="entry name" value="Urease_alpha_subunit"/>
</dbReference>
<dbReference type="InterPro" id="IPR017950">
    <property type="entry name" value="Urease_AS"/>
</dbReference>
<dbReference type="InterPro" id="IPR005848">
    <property type="entry name" value="Urease_asu"/>
</dbReference>
<dbReference type="InterPro" id="IPR017951">
    <property type="entry name" value="Urease_asu_c"/>
</dbReference>
<dbReference type="InterPro" id="IPR029754">
    <property type="entry name" value="Urease_Ni-bd"/>
</dbReference>
<dbReference type="NCBIfam" id="NF009685">
    <property type="entry name" value="PRK13206.1"/>
    <property type="match status" value="1"/>
</dbReference>
<dbReference type="NCBIfam" id="NF009686">
    <property type="entry name" value="PRK13207.1"/>
    <property type="match status" value="1"/>
</dbReference>
<dbReference type="NCBIfam" id="TIGR01792">
    <property type="entry name" value="urease_alph"/>
    <property type="match status" value="1"/>
</dbReference>
<dbReference type="PANTHER" id="PTHR43440">
    <property type="entry name" value="UREASE"/>
    <property type="match status" value="1"/>
</dbReference>
<dbReference type="PANTHER" id="PTHR43440:SF1">
    <property type="entry name" value="UREASE"/>
    <property type="match status" value="1"/>
</dbReference>
<dbReference type="Pfam" id="PF01979">
    <property type="entry name" value="Amidohydro_1"/>
    <property type="match status" value="1"/>
</dbReference>
<dbReference type="Pfam" id="PF00449">
    <property type="entry name" value="Urease_alpha"/>
    <property type="match status" value="1"/>
</dbReference>
<dbReference type="PRINTS" id="PR01752">
    <property type="entry name" value="UREASE"/>
</dbReference>
<dbReference type="SUPFAM" id="SSF51338">
    <property type="entry name" value="Composite domain of metallo-dependent hydrolases"/>
    <property type="match status" value="2"/>
</dbReference>
<dbReference type="SUPFAM" id="SSF51556">
    <property type="entry name" value="Metallo-dependent hydrolases"/>
    <property type="match status" value="1"/>
</dbReference>
<dbReference type="PROSITE" id="PS01120">
    <property type="entry name" value="UREASE_1"/>
    <property type="match status" value="1"/>
</dbReference>
<dbReference type="PROSITE" id="PS00145">
    <property type="entry name" value="UREASE_2"/>
    <property type="match status" value="1"/>
</dbReference>
<dbReference type="PROSITE" id="PS51368">
    <property type="entry name" value="UREASE_3"/>
    <property type="match status" value="1"/>
</dbReference>
<evidence type="ECO:0000255" key="1">
    <source>
        <dbReference type="HAMAP-Rule" id="MF_01953"/>
    </source>
</evidence>
<name>URE1_GEOKA</name>
<feature type="chain" id="PRO_0000234156" description="Urease subunit alpha">
    <location>
        <begin position="1"/>
        <end position="569"/>
    </location>
</feature>
<feature type="domain" description="Urease" evidence="1">
    <location>
        <begin position="131"/>
        <end position="569"/>
    </location>
</feature>
<feature type="active site" description="Proton donor" evidence="1">
    <location>
        <position position="322"/>
    </location>
</feature>
<feature type="binding site" evidence="1">
    <location>
        <position position="136"/>
    </location>
    <ligand>
        <name>Ni(2+)</name>
        <dbReference type="ChEBI" id="CHEBI:49786"/>
        <label>1</label>
    </ligand>
</feature>
<feature type="binding site" evidence="1">
    <location>
        <position position="138"/>
    </location>
    <ligand>
        <name>Ni(2+)</name>
        <dbReference type="ChEBI" id="CHEBI:49786"/>
        <label>1</label>
    </ligand>
</feature>
<feature type="binding site" description="via carbamate group" evidence="1">
    <location>
        <position position="219"/>
    </location>
    <ligand>
        <name>Ni(2+)</name>
        <dbReference type="ChEBI" id="CHEBI:49786"/>
        <label>1</label>
    </ligand>
</feature>
<feature type="binding site" description="via carbamate group" evidence="1">
    <location>
        <position position="219"/>
    </location>
    <ligand>
        <name>Ni(2+)</name>
        <dbReference type="ChEBI" id="CHEBI:49786"/>
        <label>2</label>
    </ligand>
</feature>
<feature type="binding site" evidence="1">
    <location>
        <position position="221"/>
    </location>
    <ligand>
        <name>substrate</name>
    </ligand>
</feature>
<feature type="binding site" evidence="1">
    <location>
        <position position="248"/>
    </location>
    <ligand>
        <name>Ni(2+)</name>
        <dbReference type="ChEBI" id="CHEBI:49786"/>
        <label>2</label>
    </ligand>
</feature>
<feature type="binding site" evidence="1">
    <location>
        <position position="274"/>
    </location>
    <ligand>
        <name>Ni(2+)</name>
        <dbReference type="ChEBI" id="CHEBI:49786"/>
        <label>2</label>
    </ligand>
</feature>
<feature type="binding site" evidence="1">
    <location>
        <position position="362"/>
    </location>
    <ligand>
        <name>Ni(2+)</name>
        <dbReference type="ChEBI" id="CHEBI:49786"/>
        <label>1</label>
    </ligand>
</feature>
<feature type="modified residue" description="N6-carboxylysine" evidence="1">
    <location>
        <position position="219"/>
    </location>
</feature>
<sequence length="569" mass="61400">MSFSMSRRQYADMFGPTTGDCIRLADTDLWIEIEHDYTVYGDEVKFGGGKVIRDGMGQHPLATRDEAVDLVLTNAVIVDYTGIYKADIGIKDGNIAAIGKAGNPLLMDGVNIVIGASTEVIAAEGKIVTAGGVDAHIHFICPQQIETALSSGITTMIGGGTGPATGTNATTCTPGEWNIYRMLEAAEAFPMNIGFLGKGNASAKEPIAEQVRAGAIGLKLHEDWGTTAAAIDACLRVADEYDVQVAIHTDTLNEGGFVEHTLKAINGRVIHTYHTEGAGGGHAPDIMKVASFPNILPSSTNPTRPYTKNTLDEHLDMLMVCHHLDPSVPEDIAFADSRIRKETIAAEDILHDIGAFSMISSDSQAMGRVGEVILRTWQTADKMKKQFGRLPEETGRGDNVRVKRYVAKYTINPAITHGIAEYVGSVEVGKFADLVVWHPAFFGVKPELVIKGGMIAYSVMGDPNASIPTPQPALYRPMFASYGAAIAKTSITFLSKAAFERGIPDKLGLHKIVKPVGNIRSLTKNDMVFNNAMLQIDVDPQTYEVKVDGRLITCEPAEVVAMAQRYFLF</sequence>
<gene>
    <name evidence="1" type="primary">ureC</name>
    <name type="ordered locus">GK1930</name>
</gene>
<protein>
    <recommendedName>
        <fullName evidence="1">Urease subunit alpha</fullName>
        <ecNumber evidence="1">3.5.1.5</ecNumber>
    </recommendedName>
    <alternativeName>
        <fullName evidence="1">Urea amidohydrolase subunit alpha</fullName>
    </alternativeName>
</protein>
<reference key="1">
    <citation type="journal article" date="2004" name="Nucleic Acids Res.">
        <title>Thermoadaptation trait revealed by the genome sequence of thermophilic Geobacillus kaustophilus.</title>
        <authorList>
            <person name="Takami H."/>
            <person name="Takaki Y."/>
            <person name="Chee G.-J."/>
            <person name="Nishi S."/>
            <person name="Shimamura S."/>
            <person name="Suzuki H."/>
            <person name="Matsui S."/>
            <person name="Uchiyama I."/>
        </authorList>
    </citation>
    <scope>NUCLEOTIDE SEQUENCE [LARGE SCALE GENOMIC DNA]</scope>
    <source>
        <strain>HTA426</strain>
    </source>
</reference>
<accession>Q5KYM1</accession>
<keyword id="KW-0963">Cytoplasm</keyword>
<keyword id="KW-0378">Hydrolase</keyword>
<keyword id="KW-0479">Metal-binding</keyword>
<keyword id="KW-0533">Nickel</keyword>
<keyword id="KW-1185">Reference proteome</keyword>
<proteinExistence type="inferred from homology"/>
<comment type="catalytic activity">
    <reaction evidence="1">
        <text>urea + 2 H2O + H(+) = hydrogencarbonate + 2 NH4(+)</text>
        <dbReference type="Rhea" id="RHEA:20557"/>
        <dbReference type="ChEBI" id="CHEBI:15377"/>
        <dbReference type="ChEBI" id="CHEBI:15378"/>
        <dbReference type="ChEBI" id="CHEBI:16199"/>
        <dbReference type="ChEBI" id="CHEBI:17544"/>
        <dbReference type="ChEBI" id="CHEBI:28938"/>
        <dbReference type="EC" id="3.5.1.5"/>
    </reaction>
</comment>
<comment type="cofactor">
    <cofactor evidence="1">
        <name>Ni cation</name>
        <dbReference type="ChEBI" id="CHEBI:25516"/>
    </cofactor>
    <text evidence="1">Binds 2 nickel ions per subunit.</text>
</comment>
<comment type="pathway">
    <text evidence="1">Nitrogen metabolism; urea degradation; CO(2) and NH(3) from urea (urease route): step 1/1.</text>
</comment>
<comment type="subunit">
    <text evidence="1">Heterotrimer of UreA (gamma), UreB (beta) and UreC (alpha) subunits. Three heterotrimers associate to form the active enzyme.</text>
</comment>
<comment type="subcellular location">
    <subcellularLocation>
        <location evidence="1">Cytoplasm</location>
    </subcellularLocation>
</comment>
<comment type="PTM">
    <text evidence="1">Carboxylation allows a single lysine to coordinate two nickel ions.</text>
</comment>
<comment type="similarity">
    <text evidence="1">Belongs to the metallo-dependent hydrolases superfamily. Urease alpha subunit family.</text>
</comment>
<organism>
    <name type="scientific">Geobacillus kaustophilus (strain HTA426)</name>
    <dbReference type="NCBI Taxonomy" id="235909"/>
    <lineage>
        <taxon>Bacteria</taxon>
        <taxon>Bacillati</taxon>
        <taxon>Bacillota</taxon>
        <taxon>Bacilli</taxon>
        <taxon>Bacillales</taxon>
        <taxon>Anoxybacillaceae</taxon>
        <taxon>Geobacillus</taxon>
        <taxon>Geobacillus thermoleovorans group</taxon>
    </lineage>
</organism>